<proteinExistence type="inferred from homology"/>
<evidence type="ECO:0000255" key="1">
    <source>
        <dbReference type="HAMAP-Rule" id="MF_01367"/>
    </source>
</evidence>
<evidence type="ECO:0000305" key="2"/>
<accession>B9KEF0</accession>
<dbReference type="EMBL" id="CP000932">
    <property type="protein sequence ID" value="ACM63435.1"/>
    <property type="molecule type" value="Genomic_DNA"/>
</dbReference>
<dbReference type="RefSeq" id="WP_012660821.1">
    <property type="nucleotide sequence ID" value="NC_012039.1"/>
</dbReference>
<dbReference type="SMR" id="B9KEF0"/>
<dbReference type="STRING" id="306263.Cla_0069"/>
<dbReference type="GeneID" id="93004164"/>
<dbReference type="KEGG" id="cla:CLA_0069"/>
<dbReference type="eggNOG" id="COG0093">
    <property type="taxonomic scope" value="Bacteria"/>
</dbReference>
<dbReference type="HOGENOM" id="CLU_095071_2_1_7"/>
<dbReference type="Proteomes" id="UP000007727">
    <property type="component" value="Chromosome"/>
</dbReference>
<dbReference type="GO" id="GO:0022625">
    <property type="term" value="C:cytosolic large ribosomal subunit"/>
    <property type="evidence" value="ECO:0007669"/>
    <property type="project" value="TreeGrafter"/>
</dbReference>
<dbReference type="GO" id="GO:0070180">
    <property type="term" value="F:large ribosomal subunit rRNA binding"/>
    <property type="evidence" value="ECO:0007669"/>
    <property type="project" value="TreeGrafter"/>
</dbReference>
<dbReference type="GO" id="GO:0003735">
    <property type="term" value="F:structural constituent of ribosome"/>
    <property type="evidence" value="ECO:0007669"/>
    <property type="project" value="InterPro"/>
</dbReference>
<dbReference type="GO" id="GO:0006412">
    <property type="term" value="P:translation"/>
    <property type="evidence" value="ECO:0007669"/>
    <property type="project" value="UniProtKB-UniRule"/>
</dbReference>
<dbReference type="CDD" id="cd00337">
    <property type="entry name" value="Ribosomal_uL14"/>
    <property type="match status" value="1"/>
</dbReference>
<dbReference type="FunFam" id="2.40.150.20:FF:000001">
    <property type="entry name" value="50S ribosomal protein L14"/>
    <property type="match status" value="1"/>
</dbReference>
<dbReference type="Gene3D" id="2.40.150.20">
    <property type="entry name" value="Ribosomal protein L14"/>
    <property type="match status" value="1"/>
</dbReference>
<dbReference type="HAMAP" id="MF_01367">
    <property type="entry name" value="Ribosomal_uL14"/>
    <property type="match status" value="1"/>
</dbReference>
<dbReference type="InterPro" id="IPR000218">
    <property type="entry name" value="Ribosomal_uL14"/>
</dbReference>
<dbReference type="InterPro" id="IPR005745">
    <property type="entry name" value="Ribosomal_uL14_bac-type"/>
</dbReference>
<dbReference type="InterPro" id="IPR019972">
    <property type="entry name" value="Ribosomal_uL14_CS"/>
</dbReference>
<dbReference type="InterPro" id="IPR036853">
    <property type="entry name" value="Ribosomal_uL14_sf"/>
</dbReference>
<dbReference type="NCBIfam" id="TIGR01067">
    <property type="entry name" value="rplN_bact"/>
    <property type="match status" value="1"/>
</dbReference>
<dbReference type="PANTHER" id="PTHR11761">
    <property type="entry name" value="50S/60S RIBOSOMAL PROTEIN L14/L23"/>
    <property type="match status" value="1"/>
</dbReference>
<dbReference type="PANTHER" id="PTHR11761:SF3">
    <property type="entry name" value="LARGE RIBOSOMAL SUBUNIT PROTEIN UL14M"/>
    <property type="match status" value="1"/>
</dbReference>
<dbReference type="Pfam" id="PF00238">
    <property type="entry name" value="Ribosomal_L14"/>
    <property type="match status" value="1"/>
</dbReference>
<dbReference type="SMART" id="SM01374">
    <property type="entry name" value="Ribosomal_L14"/>
    <property type="match status" value="1"/>
</dbReference>
<dbReference type="SUPFAM" id="SSF50193">
    <property type="entry name" value="Ribosomal protein L14"/>
    <property type="match status" value="1"/>
</dbReference>
<dbReference type="PROSITE" id="PS00049">
    <property type="entry name" value="RIBOSOMAL_L14"/>
    <property type="match status" value="1"/>
</dbReference>
<organism>
    <name type="scientific">Campylobacter lari (strain RM2100 / D67 / ATCC BAA-1060)</name>
    <dbReference type="NCBI Taxonomy" id="306263"/>
    <lineage>
        <taxon>Bacteria</taxon>
        <taxon>Pseudomonadati</taxon>
        <taxon>Campylobacterota</taxon>
        <taxon>Epsilonproteobacteria</taxon>
        <taxon>Campylobacterales</taxon>
        <taxon>Campylobacteraceae</taxon>
        <taxon>Campylobacter</taxon>
    </lineage>
</organism>
<feature type="chain" id="PRO_1000166907" description="Large ribosomal subunit protein uL14">
    <location>
        <begin position="1"/>
        <end position="122"/>
    </location>
</feature>
<sequence length="122" mass="13263">MIQSFTRLAVADNSGAKELMCIKVLGGSKRRYATVGDVIVASVKKALPNGKVKKGQVVKAVIVRTKKEIHRDNGSLIRFDENAAVILDAKREPIGTRIFGPVGREVRYGGFMKIVSLAPEVL</sequence>
<keyword id="KW-1185">Reference proteome</keyword>
<keyword id="KW-0687">Ribonucleoprotein</keyword>
<keyword id="KW-0689">Ribosomal protein</keyword>
<keyword id="KW-0694">RNA-binding</keyword>
<keyword id="KW-0699">rRNA-binding</keyword>
<reference key="1">
    <citation type="journal article" date="2008" name="Foodborne Pathog. Dis.">
        <title>The complete genome sequence and analysis of the human pathogen Campylobacter lari.</title>
        <authorList>
            <person name="Miller W.G."/>
            <person name="Wang G."/>
            <person name="Binnewies T.T."/>
            <person name="Parker C.T."/>
        </authorList>
    </citation>
    <scope>NUCLEOTIDE SEQUENCE [LARGE SCALE GENOMIC DNA]</scope>
    <source>
        <strain>RM2100 / D67 / ATCC BAA-1060</strain>
    </source>
</reference>
<comment type="function">
    <text evidence="1">Binds to 23S rRNA. Forms part of two intersubunit bridges in the 70S ribosome.</text>
</comment>
<comment type="subunit">
    <text evidence="1">Part of the 50S ribosomal subunit. Forms a cluster with proteins L3 and L19. In the 70S ribosome, L14 and L19 interact and together make contacts with the 16S rRNA in bridges B5 and B8.</text>
</comment>
<comment type="similarity">
    <text evidence="1">Belongs to the universal ribosomal protein uL14 family.</text>
</comment>
<protein>
    <recommendedName>
        <fullName evidence="1">Large ribosomal subunit protein uL14</fullName>
    </recommendedName>
    <alternativeName>
        <fullName evidence="2">50S ribosomal protein L14</fullName>
    </alternativeName>
</protein>
<gene>
    <name evidence="1" type="primary">rplN</name>
    <name type="ordered locus">Cla_0069</name>
</gene>
<name>RL14_CAMLR</name>